<proteinExistence type="evidence at protein level"/>
<keyword id="KW-0002">3D-structure</keyword>
<keyword id="KW-0106">Calcium</keyword>
<keyword id="KW-0963">Cytoplasm</keyword>
<keyword id="KW-0968">Cytoplasmic vesicle</keyword>
<keyword id="KW-0378">Hydrolase</keyword>
<keyword id="KW-0442">Lipid degradation</keyword>
<keyword id="KW-0443">Lipid metabolism</keyword>
<keyword id="KW-0479">Metal-binding</keyword>
<keyword id="KW-0597">Phosphoprotein</keyword>
<keyword id="KW-1185">Reference proteome</keyword>
<protein>
    <recommendedName>
        <fullName>Cytosolic phospholipase A2</fullName>
        <shortName>cPLA2</shortName>
    </recommendedName>
    <alternativeName>
        <fullName>Phospholipase A2 group IVA</fullName>
    </alternativeName>
    <domain>
        <recommendedName>
            <fullName>Phospholipase A2</fullName>
            <ecNumber>3.1.1.4</ecNumber>
        </recommendedName>
        <alternativeName>
            <fullName>Phosphatidylcholine 2-acylhydrolase</fullName>
        </alternativeName>
    </domain>
    <domain>
        <recommendedName>
            <fullName>Lysophospholipase</fullName>
            <ecNumber>3.1.1.5</ecNumber>
        </recommendedName>
    </domain>
</protein>
<dbReference type="EC" id="3.1.1.4"/>
<dbReference type="EC" id="3.1.1.5"/>
<dbReference type="EMBL" id="U10329">
    <property type="protein sequence ID" value="AAA53228.1"/>
    <property type="molecule type" value="mRNA"/>
</dbReference>
<dbReference type="PIR" id="I50699">
    <property type="entry name" value="I50699"/>
</dbReference>
<dbReference type="RefSeq" id="NP_990754.1">
    <property type="nucleotide sequence ID" value="NM_205423.1"/>
</dbReference>
<dbReference type="RefSeq" id="XP_015146058.1">
    <property type="nucleotide sequence ID" value="XM_015290572.4"/>
</dbReference>
<dbReference type="RefSeq" id="XP_025008534.1">
    <property type="nucleotide sequence ID" value="XM_025152766.3"/>
</dbReference>
<dbReference type="RefSeq" id="XP_025008535.1">
    <property type="nucleotide sequence ID" value="XM_025152767.3"/>
</dbReference>
<dbReference type="RefSeq" id="XP_040560444.1">
    <property type="nucleotide sequence ID" value="XM_040704510.2"/>
</dbReference>
<dbReference type="RefSeq" id="XP_040560445.1">
    <property type="nucleotide sequence ID" value="XM_040704511.2"/>
</dbReference>
<dbReference type="RefSeq" id="XP_040560446.1">
    <property type="nucleotide sequence ID" value="XM_040704512.2"/>
</dbReference>
<dbReference type="RefSeq" id="XP_040560447.1">
    <property type="nucleotide sequence ID" value="XM_040704513.2"/>
</dbReference>
<dbReference type="RefSeq" id="XP_040560448.1">
    <property type="nucleotide sequence ID" value="XM_040704514.2"/>
</dbReference>
<dbReference type="RefSeq" id="XP_046778358.1">
    <property type="nucleotide sequence ID" value="XM_046922402.1"/>
</dbReference>
<dbReference type="RefSeq" id="XP_046778359.1">
    <property type="nucleotide sequence ID" value="XM_046922403.1"/>
</dbReference>
<dbReference type="RefSeq" id="XP_046778360.1">
    <property type="nucleotide sequence ID" value="XM_046922404.1"/>
</dbReference>
<dbReference type="RefSeq" id="XP_046778361.1">
    <property type="nucleotide sequence ID" value="XM_046922405.1"/>
</dbReference>
<dbReference type="RefSeq" id="XP_046778362.1">
    <property type="nucleotide sequence ID" value="XM_046922406.1"/>
</dbReference>
<dbReference type="RefSeq" id="XP_046778363.1">
    <property type="nucleotide sequence ID" value="XM_046922407.1"/>
</dbReference>
<dbReference type="RefSeq" id="XP_046778365.1">
    <property type="nucleotide sequence ID" value="XM_046922409.1"/>
</dbReference>
<dbReference type="RefSeq" id="XP_046778366.1">
    <property type="nucleotide sequence ID" value="XM_046922410.1"/>
</dbReference>
<dbReference type="RefSeq" id="XP_046778367.1">
    <property type="nucleotide sequence ID" value="XM_046922411.1"/>
</dbReference>
<dbReference type="RefSeq" id="XP_046778368.1">
    <property type="nucleotide sequence ID" value="XM_046922412.1"/>
</dbReference>
<dbReference type="RefSeq" id="XP_046778369.1">
    <property type="nucleotide sequence ID" value="XM_046922413.1"/>
</dbReference>
<dbReference type="RefSeq" id="XP_046778370.1">
    <property type="nucleotide sequence ID" value="XM_046922414.1"/>
</dbReference>
<dbReference type="RefSeq" id="XP_046778371.1">
    <property type="nucleotide sequence ID" value="XM_046922415.1"/>
</dbReference>
<dbReference type="RefSeq" id="XP_046778372.1">
    <property type="nucleotide sequence ID" value="XM_046922416.1"/>
</dbReference>
<dbReference type="RefSeq" id="XP_046778373.1">
    <property type="nucleotide sequence ID" value="XM_046922417.1"/>
</dbReference>
<dbReference type="RefSeq" id="XP_046778374.1">
    <property type="nucleotide sequence ID" value="XM_046922418.1"/>
</dbReference>
<dbReference type="RefSeq" id="XP_046778375.1">
    <property type="nucleotide sequence ID" value="XM_046922419.1"/>
</dbReference>
<dbReference type="RefSeq" id="XP_046778376.1">
    <property type="nucleotide sequence ID" value="XM_046922420.1"/>
</dbReference>
<dbReference type="RefSeq" id="XP_046778377.1">
    <property type="nucleotide sequence ID" value="XM_046922421.1"/>
</dbReference>
<dbReference type="RefSeq" id="XP_046778378.1">
    <property type="nucleotide sequence ID" value="XM_046922422.1"/>
</dbReference>
<dbReference type="RefSeq" id="XP_046778379.1">
    <property type="nucleotide sequence ID" value="XM_046922423.1"/>
</dbReference>
<dbReference type="RefSeq" id="XP_046800261.1">
    <property type="nucleotide sequence ID" value="XM_046944305.1"/>
</dbReference>
<dbReference type="RefSeq" id="XP_046800262.1">
    <property type="nucleotide sequence ID" value="XM_046944306.1"/>
</dbReference>
<dbReference type="RefSeq" id="XP_046800263.1">
    <property type="nucleotide sequence ID" value="XM_046944307.1"/>
</dbReference>
<dbReference type="RefSeq" id="XP_046800264.1">
    <property type="nucleotide sequence ID" value="XM_046944308.1"/>
</dbReference>
<dbReference type="RefSeq" id="XP_046800265.1">
    <property type="nucleotide sequence ID" value="XM_046944309.1"/>
</dbReference>
<dbReference type="RefSeq" id="XP_046800266.1">
    <property type="nucleotide sequence ID" value="XM_046944310.1"/>
</dbReference>
<dbReference type="RefSeq" id="XP_046800267.1">
    <property type="nucleotide sequence ID" value="XM_046944311.1"/>
</dbReference>
<dbReference type="RefSeq" id="XP_046800268.1">
    <property type="nucleotide sequence ID" value="XM_046944312.1"/>
</dbReference>
<dbReference type="RefSeq" id="XP_046800269.1">
    <property type="nucleotide sequence ID" value="XM_046944313.1"/>
</dbReference>
<dbReference type="RefSeq" id="XP_046800270.1">
    <property type="nucleotide sequence ID" value="XM_046944314.1"/>
</dbReference>
<dbReference type="RefSeq" id="XP_046800271.1">
    <property type="nucleotide sequence ID" value="XM_046944315.1"/>
</dbReference>
<dbReference type="RefSeq" id="XP_046800272.1">
    <property type="nucleotide sequence ID" value="XM_046944316.1"/>
</dbReference>
<dbReference type="RefSeq" id="XP_046800273.1">
    <property type="nucleotide sequence ID" value="XM_046944317.1"/>
</dbReference>
<dbReference type="PDB" id="6IEJ">
    <property type="method" value="X-ray"/>
    <property type="resolution" value="2.21 A"/>
    <property type="chains" value="A/B/C=16-140"/>
</dbReference>
<dbReference type="PDBsum" id="6IEJ"/>
<dbReference type="SMR" id="P49147"/>
<dbReference type="FunCoup" id="P49147">
    <property type="interactions" value="264"/>
</dbReference>
<dbReference type="STRING" id="9031.ENSGALP00000008107"/>
<dbReference type="PaxDb" id="9031-ENSGALP00000008107"/>
<dbReference type="Ensembl" id="ENSGALT00010050885.1">
    <property type="protein sequence ID" value="ENSGALP00010030076.1"/>
    <property type="gene ID" value="ENSGALG00010021027.1"/>
</dbReference>
<dbReference type="GeneID" id="396394"/>
<dbReference type="KEGG" id="gga:396394"/>
<dbReference type="CTD" id="5321"/>
<dbReference type="VEuPathDB" id="HostDB:geneid_396394"/>
<dbReference type="eggNOG" id="KOG1012">
    <property type="taxonomic scope" value="Eukaryota"/>
</dbReference>
<dbReference type="eggNOG" id="KOG1325">
    <property type="taxonomic scope" value="Eukaryota"/>
</dbReference>
<dbReference type="GeneTree" id="ENSGT01030000234606"/>
<dbReference type="HOGENOM" id="CLU_011663_1_1_1"/>
<dbReference type="InParanoid" id="P49147"/>
<dbReference type="OMA" id="NQESWVQ"/>
<dbReference type="OrthoDB" id="419768at2759"/>
<dbReference type="PhylomeDB" id="P49147"/>
<dbReference type="Reactome" id="R-GGA-111995">
    <property type="pathway name" value="phospho-PLA2 pathway"/>
</dbReference>
<dbReference type="Reactome" id="R-GGA-1482788">
    <property type="pathway name" value="Acyl chain remodelling of PC"/>
</dbReference>
<dbReference type="Reactome" id="R-GGA-1482798">
    <property type="pathway name" value="Acyl chain remodeling of CL"/>
</dbReference>
<dbReference type="Reactome" id="R-GGA-1482801">
    <property type="pathway name" value="Acyl chain remodelling of PS"/>
</dbReference>
<dbReference type="Reactome" id="R-GGA-1482839">
    <property type="pathway name" value="Acyl chain remodelling of PE"/>
</dbReference>
<dbReference type="Reactome" id="R-GGA-1482922">
    <property type="pathway name" value="Acyl chain remodelling of PI"/>
</dbReference>
<dbReference type="Reactome" id="R-GGA-1482925">
    <property type="pathway name" value="Acyl chain remodelling of PG"/>
</dbReference>
<dbReference type="Reactome" id="R-GGA-1483115">
    <property type="pathway name" value="Hydrolysis of LPC"/>
</dbReference>
<dbReference type="Reactome" id="R-GGA-1483166">
    <property type="pathway name" value="Synthesis of PA"/>
</dbReference>
<dbReference type="Reactome" id="R-GGA-2142753">
    <property type="pathway name" value="Arachidonate metabolism"/>
</dbReference>
<dbReference type="Reactome" id="R-GGA-418592">
    <property type="pathway name" value="ADP signalling through P2Y purinoceptor 1"/>
</dbReference>
<dbReference type="Reactome" id="R-GGA-432142">
    <property type="pathway name" value="Platelet sensitization by LDL"/>
</dbReference>
<dbReference type="Reactome" id="R-GGA-6811436">
    <property type="pathway name" value="COPI-independent Golgi-to-ER retrograde traffic"/>
</dbReference>
<dbReference type="PRO" id="PR:P49147"/>
<dbReference type="Proteomes" id="UP000000539">
    <property type="component" value="Chromosome 8"/>
</dbReference>
<dbReference type="Bgee" id="ENSGALG00000005065">
    <property type="expression patterns" value="Expressed in cerebellum and 12 other cell types or tissues"/>
</dbReference>
<dbReference type="GO" id="GO:0031410">
    <property type="term" value="C:cytoplasmic vesicle"/>
    <property type="evidence" value="ECO:0007669"/>
    <property type="project" value="UniProtKB-KW"/>
</dbReference>
<dbReference type="GO" id="GO:0005829">
    <property type="term" value="C:cytosol"/>
    <property type="evidence" value="ECO:0000318"/>
    <property type="project" value="GO_Central"/>
</dbReference>
<dbReference type="GO" id="GO:0005783">
    <property type="term" value="C:endoplasmic reticulum"/>
    <property type="evidence" value="ECO:0000318"/>
    <property type="project" value="GO_Central"/>
</dbReference>
<dbReference type="GO" id="GO:0005794">
    <property type="term" value="C:Golgi apparatus"/>
    <property type="evidence" value="ECO:0000318"/>
    <property type="project" value="GO_Central"/>
</dbReference>
<dbReference type="GO" id="GO:0000139">
    <property type="term" value="C:Golgi membrane"/>
    <property type="evidence" value="ECO:0007669"/>
    <property type="project" value="Ensembl"/>
</dbReference>
<dbReference type="GO" id="GO:0005635">
    <property type="term" value="C:nuclear envelope"/>
    <property type="evidence" value="ECO:0007669"/>
    <property type="project" value="Ensembl"/>
</dbReference>
<dbReference type="GO" id="GO:0005634">
    <property type="term" value="C:nucleus"/>
    <property type="evidence" value="ECO:0000318"/>
    <property type="project" value="GO_Central"/>
</dbReference>
<dbReference type="GO" id="GO:0005509">
    <property type="term" value="F:calcium ion binding"/>
    <property type="evidence" value="ECO:0000318"/>
    <property type="project" value="GO_Central"/>
</dbReference>
<dbReference type="GO" id="GO:0047498">
    <property type="term" value="F:calcium-dependent phospholipase A2 activity"/>
    <property type="evidence" value="ECO:0000318"/>
    <property type="project" value="GO_Central"/>
</dbReference>
<dbReference type="GO" id="GO:0005544">
    <property type="term" value="F:calcium-dependent phospholipid binding"/>
    <property type="evidence" value="ECO:0000318"/>
    <property type="project" value="GO_Central"/>
</dbReference>
<dbReference type="GO" id="GO:0047499">
    <property type="term" value="F:calcium-independent phospholipase A2 activity"/>
    <property type="evidence" value="ECO:0007669"/>
    <property type="project" value="Ensembl"/>
</dbReference>
<dbReference type="GO" id="GO:1902387">
    <property type="term" value="F:ceramide 1-phosphate binding"/>
    <property type="evidence" value="ECO:0007669"/>
    <property type="project" value="Ensembl"/>
</dbReference>
<dbReference type="GO" id="GO:0004622">
    <property type="term" value="F:lysophospholipase activity"/>
    <property type="evidence" value="ECO:0007669"/>
    <property type="project" value="UniProtKB-EC"/>
</dbReference>
<dbReference type="GO" id="GO:0008374">
    <property type="term" value="F:O-acyltransferase activity"/>
    <property type="evidence" value="ECO:0007669"/>
    <property type="project" value="Ensembl"/>
</dbReference>
<dbReference type="GO" id="GO:0032266">
    <property type="term" value="F:phosphatidylinositol-3-phosphate binding"/>
    <property type="evidence" value="ECO:0007669"/>
    <property type="project" value="Ensembl"/>
</dbReference>
<dbReference type="GO" id="GO:0070273">
    <property type="term" value="F:phosphatidylinositol-4-phosphate binding"/>
    <property type="evidence" value="ECO:0007669"/>
    <property type="project" value="Ensembl"/>
</dbReference>
<dbReference type="GO" id="GO:0010314">
    <property type="term" value="F:phosphatidylinositol-5-phosphate binding"/>
    <property type="evidence" value="ECO:0007669"/>
    <property type="project" value="Ensembl"/>
</dbReference>
<dbReference type="GO" id="GO:0019369">
    <property type="term" value="P:arachidonate metabolic process"/>
    <property type="evidence" value="ECO:0007669"/>
    <property type="project" value="Ensembl"/>
</dbReference>
<dbReference type="GO" id="GO:0050482">
    <property type="term" value="P:arachidonate secretion"/>
    <property type="evidence" value="ECO:0007669"/>
    <property type="project" value="Ensembl"/>
</dbReference>
<dbReference type="GO" id="GO:0071236">
    <property type="term" value="P:cellular response to antibiotic"/>
    <property type="evidence" value="ECO:0007669"/>
    <property type="project" value="Ensembl"/>
</dbReference>
<dbReference type="GO" id="GO:0051649">
    <property type="term" value="P:establishment of localization in cell"/>
    <property type="evidence" value="ECO:0007669"/>
    <property type="project" value="Ensembl"/>
</dbReference>
<dbReference type="GO" id="GO:0046475">
    <property type="term" value="P:glycerophospholipid catabolic process"/>
    <property type="evidence" value="ECO:0000318"/>
    <property type="project" value="GO_Central"/>
</dbReference>
<dbReference type="GO" id="GO:0019370">
    <property type="term" value="P:leukotriene biosynthetic process"/>
    <property type="evidence" value="ECO:0007669"/>
    <property type="project" value="Ensembl"/>
</dbReference>
<dbReference type="GO" id="GO:0006640">
    <property type="term" value="P:monoacylglycerol biosynthetic process"/>
    <property type="evidence" value="ECO:0007669"/>
    <property type="project" value="Ensembl"/>
</dbReference>
<dbReference type="GO" id="GO:0036151">
    <property type="term" value="P:phosphatidylcholine acyl-chain remodeling"/>
    <property type="evidence" value="ECO:0007669"/>
    <property type="project" value="Ensembl"/>
</dbReference>
<dbReference type="GO" id="GO:0034638">
    <property type="term" value="P:phosphatidylcholine catabolic process"/>
    <property type="evidence" value="ECO:0007669"/>
    <property type="project" value="Ensembl"/>
</dbReference>
<dbReference type="GO" id="GO:0034478">
    <property type="term" value="P:phosphatidylglycerol catabolic process"/>
    <property type="evidence" value="ECO:0007669"/>
    <property type="project" value="Ensembl"/>
</dbReference>
<dbReference type="GO" id="GO:0006663">
    <property type="term" value="P:platelet activating factor biosynthetic process"/>
    <property type="evidence" value="ECO:0007669"/>
    <property type="project" value="Ensembl"/>
</dbReference>
<dbReference type="GO" id="GO:0043032">
    <property type="term" value="P:positive regulation of macrophage activation"/>
    <property type="evidence" value="ECO:0007669"/>
    <property type="project" value="Ensembl"/>
</dbReference>
<dbReference type="GO" id="GO:0010572">
    <property type="term" value="P:positive regulation of platelet activation"/>
    <property type="evidence" value="ECO:0007669"/>
    <property type="project" value="Ensembl"/>
</dbReference>
<dbReference type="GO" id="GO:0032308">
    <property type="term" value="P:positive regulation of prostaglandin secretion"/>
    <property type="evidence" value="ECO:0007669"/>
    <property type="project" value="Ensembl"/>
</dbReference>
<dbReference type="GO" id="GO:0002827">
    <property type="term" value="P:positive regulation of T-helper 1 type immune response"/>
    <property type="evidence" value="ECO:0007669"/>
    <property type="project" value="Ensembl"/>
</dbReference>
<dbReference type="GO" id="GO:0001516">
    <property type="term" value="P:prostaglandin biosynthetic process"/>
    <property type="evidence" value="ECO:0007669"/>
    <property type="project" value="Ensembl"/>
</dbReference>
<dbReference type="GO" id="GO:0042127">
    <property type="term" value="P:regulation of cell population proliferation"/>
    <property type="evidence" value="ECO:0007669"/>
    <property type="project" value="Ensembl"/>
</dbReference>
<dbReference type="CDD" id="cd04036">
    <property type="entry name" value="C2_cPLA2"/>
    <property type="match status" value="1"/>
</dbReference>
<dbReference type="CDD" id="cd07200">
    <property type="entry name" value="cPLA2_Grp-IVA"/>
    <property type="match status" value="1"/>
</dbReference>
<dbReference type="FunFam" id="2.60.40.150:FF:000030">
    <property type="entry name" value="Phospholipase A2"/>
    <property type="match status" value="1"/>
</dbReference>
<dbReference type="Gene3D" id="2.60.40.150">
    <property type="entry name" value="C2 domain"/>
    <property type="match status" value="1"/>
</dbReference>
<dbReference type="Gene3D" id="3.40.1090.10">
    <property type="entry name" value="Cytosolic phospholipase A2 catalytic domain"/>
    <property type="match status" value="1"/>
</dbReference>
<dbReference type="InterPro" id="IPR016035">
    <property type="entry name" value="Acyl_Trfase/lysoPLipase"/>
</dbReference>
<dbReference type="InterPro" id="IPR041847">
    <property type="entry name" value="C2_cPLA2"/>
</dbReference>
<dbReference type="InterPro" id="IPR000008">
    <property type="entry name" value="C2_dom"/>
</dbReference>
<dbReference type="InterPro" id="IPR035892">
    <property type="entry name" value="C2_domain_sf"/>
</dbReference>
<dbReference type="InterPro" id="IPR002642">
    <property type="entry name" value="LysoPLipase_cat_dom"/>
</dbReference>
<dbReference type="PANTHER" id="PTHR10728">
    <property type="entry name" value="CYTOSOLIC PHOSPHOLIPASE A2"/>
    <property type="match status" value="1"/>
</dbReference>
<dbReference type="PANTHER" id="PTHR10728:SF13">
    <property type="entry name" value="CYTOSOLIC PHOSPHOLIPASE A2"/>
    <property type="match status" value="1"/>
</dbReference>
<dbReference type="Pfam" id="PF00168">
    <property type="entry name" value="C2"/>
    <property type="match status" value="1"/>
</dbReference>
<dbReference type="Pfam" id="PF01735">
    <property type="entry name" value="PLA2_B"/>
    <property type="match status" value="1"/>
</dbReference>
<dbReference type="SMART" id="SM00239">
    <property type="entry name" value="C2"/>
    <property type="match status" value="1"/>
</dbReference>
<dbReference type="SMART" id="SM00022">
    <property type="entry name" value="PLAc"/>
    <property type="match status" value="1"/>
</dbReference>
<dbReference type="SUPFAM" id="SSF49562">
    <property type="entry name" value="C2 domain (Calcium/lipid-binding domain, CaLB)"/>
    <property type="match status" value="1"/>
</dbReference>
<dbReference type="SUPFAM" id="SSF52151">
    <property type="entry name" value="FabD/lysophospholipase-like"/>
    <property type="match status" value="1"/>
</dbReference>
<dbReference type="PROSITE" id="PS50004">
    <property type="entry name" value="C2"/>
    <property type="match status" value="1"/>
</dbReference>
<dbReference type="PROSITE" id="PS51210">
    <property type="entry name" value="PLA2C"/>
    <property type="match status" value="1"/>
</dbReference>
<evidence type="ECO:0000250" key="1"/>
<evidence type="ECO:0000255" key="2">
    <source>
        <dbReference type="PROSITE-ProRule" id="PRU00041"/>
    </source>
</evidence>
<evidence type="ECO:0000255" key="3">
    <source>
        <dbReference type="PROSITE-ProRule" id="PRU00555"/>
    </source>
</evidence>
<evidence type="ECO:0000256" key="4">
    <source>
        <dbReference type="SAM" id="MobiDB-lite"/>
    </source>
</evidence>
<evidence type="ECO:0007829" key="5">
    <source>
        <dbReference type="PDB" id="6IEJ"/>
    </source>
</evidence>
<name>PA24A_CHICK</name>
<accession>P49147</accession>
<comment type="function">
    <text>Selectively hydrolyzes arachidonyl phospholipids in the sn-2 position releasing arachidonic acid. Together with its lysophospholipid activity, it is implicated in the initiation of the inflammatory response.</text>
</comment>
<comment type="catalytic activity">
    <reaction>
        <text>a 1,2-diacyl-sn-glycero-3-phosphocholine + H2O = a 1-acyl-sn-glycero-3-phosphocholine + a fatty acid + H(+)</text>
        <dbReference type="Rhea" id="RHEA:15801"/>
        <dbReference type="ChEBI" id="CHEBI:15377"/>
        <dbReference type="ChEBI" id="CHEBI:15378"/>
        <dbReference type="ChEBI" id="CHEBI:28868"/>
        <dbReference type="ChEBI" id="CHEBI:57643"/>
        <dbReference type="ChEBI" id="CHEBI:58168"/>
        <dbReference type="EC" id="3.1.1.4"/>
    </reaction>
</comment>
<comment type="catalytic activity">
    <reaction>
        <text>a 1-acyl-sn-glycero-3-phosphocholine + H2O = sn-glycerol 3-phosphocholine + a fatty acid + H(+)</text>
        <dbReference type="Rhea" id="RHEA:15177"/>
        <dbReference type="ChEBI" id="CHEBI:15377"/>
        <dbReference type="ChEBI" id="CHEBI:15378"/>
        <dbReference type="ChEBI" id="CHEBI:16870"/>
        <dbReference type="ChEBI" id="CHEBI:28868"/>
        <dbReference type="ChEBI" id="CHEBI:58168"/>
        <dbReference type="EC" id="3.1.1.5"/>
    </reaction>
</comment>
<comment type="activity regulation">
    <text>Stimulated by agonists such as ATP, EGF, thrombin and bradykinin as well as by cytosolic Ca(2+).</text>
</comment>
<comment type="subcellular location">
    <subcellularLocation>
        <location evidence="1">Cytoplasm</location>
    </subcellularLocation>
    <subcellularLocation>
        <location evidence="1">Cytoplasmic vesicle</location>
    </subcellularLocation>
    <text evidence="1">Translocates to membrane vesicles in a calcium-dependent fashion.</text>
</comment>
<comment type="domain">
    <text evidence="1">The N-terminal C2 domain associates with lipid membranes upon calcium binding. It modulates enzyme activity by presenting the active site to its substrate in response to elevations of cytosolic Ca(2+) (By similarity).</text>
</comment>
<comment type="PTM">
    <text evidence="1">Activated by phosphorylation on a serine residue.</text>
</comment>
<organism>
    <name type="scientific">Gallus gallus</name>
    <name type="common">Chicken</name>
    <dbReference type="NCBI Taxonomy" id="9031"/>
    <lineage>
        <taxon>Eukaryota</taxon>
        <taxon>Metazoa</taxon>
        <taxon>Chordata</taxon>
        <taxon>Craniata</taxon>
        <taxon>Vertebrata</taxon>
        <taxon>Euteleostomi</taxon>
        <taxon>Archelosauria</taxon>
        <taxon>Archosauria</taxon>
        <taxon>Dinosauria</taxon>
        <taxon>Saurischia</taxon>
        <taxon>Theropoda</taxon>
        <taxon>Coelurosauria</taxon>
        <taxon>Aves</taxon>
        <taxon>Neognathae</taxon>
        <taxon>Galloanserae</taxon>
        <taxon>Galliformes</taxon>
        <taxon>Phasianidae</taxon>
        <taxon>Phasianinae</taxon>
        <taxon>Gallus</taxon>
    </lineage>
</organism>
<reference key="1">
    <citation type="journal article" date="1994" name="J. Biol. Chem.">
        <title>Delineation of two functionally distinct domains of cytosolic phospholipase A2, a regulatory Ca(2+)-dependent lipid-binding domain and a Ca(2+)-independent catalytic domain.</title>
        <authorList>
            <person name="Nalefski E.A."/>
            <person name="Sultzman L.A."/>
            <person name="Martin D.M."/>
            <person name="Kriz R.W."/>
            <person name="Towler P.S."/>
            <person name="Knopf J.L."/>
            <person name="Clark J.D."/>
        </authorList>
    </citation>
    <scope>NUCLEOTIDE SEQUENCE [MRNA]</scope>
    <scope>CHARACTERIZATION</scope>
</reference>
<gene>
    <name type="primary">PLA2G4A</name>
    <name type="synonym">CPLA2</name>
    <name type="synonym">PLA2G4</name>
</gene>
<sequence length="748" mass="84979">MSFIDPYQHIVVEHQYSHVFTVTVRKATNVTKGAIGDMLDTPDPYVELFIPSAPDCRKRTKHFNNDVNPVWNETFEFILDPNQDNVLEVTLMDANYVMDETLGMATFPISSLKLGEKKEVQLTFNNVTEMTLELSLEVCSSTDLRFSMALCDEEKKFRQQRKDNIMQSMKSFLGEENSKNLTTSRDVPVIAVLGSGGGFRAMVGFAGVMKALYESGVLDCATYIAGLSGSTWYMSTLYSHPDFPEKGPKEINQELMNSVSHNPLLLLTPQKVKRYIEALWNKKSSGQPVTFTDIFGMLIGETLIHNRMDTTLSDMKEKVSEAQCALPLFTCLHVKPDVSELMFADWVEFSPYEIGMAKYGTFMSPDLFGSKFFMGTVVKKYSENPLHFLMGVWGSAFSILFNRVLGVSNSQNKGPTMEEELENIRLKHLVSNDSSDSEDESQHPKGTENSEANEEYQNSSQESWVQRMLMALVGDSALFNTREGRAGKVHNFMLGLNLNSCYPLSPLADLLTQESVEEDELDAAVADPDEFERIYEPLDVKSKKIHIVDSGLTFNLPYPLILRPQRGVDLIISFDFSARPSDSSPPFKEILLAEKWAKMNKLPFPKIDPNVFDREGLKECYVFKPKDTSSEKDCPTIIHFVLANINFRKYKAPGLPRESKEEKDFADFDIFDDPNTPFSTFNFQYPNEAFKRLHDLMEFNTLNNLDVIKQAMMESIEYRKENPSRCSVSLSSVEARRFFNKNNLNNHT</sequence>
<feature type="chain" id="PRO_0000187266" description="Cytosolic phospholipase A2">
    <location>
        <begin position="1"/>
        <end position="748"/>
    </location>
</feature>
<feature type="domain" description="C2" evidence="2">
    <location>
        <begin position="6"/>
        <end position="124"/>
    </location>
</feature>
<feature type="domain" description="PLA2c" evidence="3">
    <location>
        <begin position="138"/>
        <end position="740"/>
    </location>
</feature>
<feature type="region of interest" description="Phospholipid binding">
    <location>
        <begin position="1"/>
        <end position="178"/>
    </location>
</feature>
<feature type="region of interest" description="Disordered" evidence="4">
    <location>
        <begin position="431"/>
        <end position="459"/>
    </location>
</feature>
<feature type="compositionally biased region" description="Polar residues" evidence="4">
    <location>
        <begin position="449"/>
        <end position="459"/>
    </location>
</feature>
<feature type="active site" description="Nucleophile" evidence="1">
    <location>
        <position position="228"/>
    </location>
</feature>
<feature type="active site" description="Proton acceptor" evidence="1">
    <location>
        <position position="549"/>
    </location>
</feature>
<feature type="binding site" evidence="1">
    <location>
        <position position="40"/>
    </location>
    <ligand>
        <name>Ca(2+)</name>
        <dbReference type="ChEBI" id="CHEBI:29108"/>
        <label>1</label>
    </ligand>
</feature>
<feature type="binding site" evidence="1">
    <location>
        <position position="40"/>
    </location>
    <ligand>
        <name>Ca(2+)</name>
        <dbReference type="ChEBI" id="CHEBI:29108"/>
        <label>2</label>
    </ligand>
</feature>
<feature type="binding site" evidence="1">
    <location>
        <position position="41"/>
    </location>
    <ligand>
        <name>Ca(2+)</name>
        <dbReference type="ChEBI" id="CHEBI:29108"/>
        <label>1</label>
    </ligand>
</feature>
<feature type="binding site" evidence="1">
    <location>
        <position position="43"/>
    </location>
    <ligand>
        <name>Ca(2+)</name>
        <dbReference type="ChEBI" id="CHEBI:29108"/>
        <label>1</label>
    </ligand>
</feature>
<feature type="binding site" evidence="1">
    <location>
        <position position="43"/>
    </location>
    <ligand>
        <name>Ca(2+)</name>
        <dbReference type="ChEBI" id="CHEBI:29108"/>
        <label>2</label>
    </ligand>
</feature>
<feature type="binding site" evidence="1">
    <location>
        <position position="65"/>
    </location>
    <ligand>
        <name>Ca(2+)</name>
        <dbReference type="ChEBI" id="CHEBI:29108"/>
        <label>1</label>
    </ligand>
</feature>
<feature type="binding site" evidence="1">
    <location>
        <position position="93"/>
    </location>
    <ligand>
        <name>Ca(2+)</name>
        <dbReference type="ChEBI" id="CHEBI:29108"/>
        <label>2</label>
    </ligand>
</feature>
<feature type="binding site" evidence="1">
    <location>
        <position position="94"/>
    </location>
    <ligand>
        <name>Ca(2+)</name>
        <dbReference type="ChEBI" id="CHEBI:29108"/>
        <label>2</label>
    </ligand>
</feature>
<feature type="binding site" evidence="1">
    <location>
        <position position="95"/>
    </location>
    <ligand>
        <name>Ca(2+)</name>
        <dbReference type="ChEBI" id="CHEBI:29108"/>
        <label>2</label>
    </ligand>
</feature>
<feature type="modified residue" description="Phosphoserine; by MAPK" evidence="1">
    <location>
        <position position="505"/>
    </location>
</feature>
<feature type="strand" evidence="5">
    <location>
        <begin position="18"/>
        <end position="29"/>
    </location>
</feature>
<feature type="helix" evidence="5">
    <location>
        <begin position="34"/>
        <end position="39"/>
    </location>
</feature>
<feature type="strand" evidence="5">
    <location>
        <begin position="44"/>
        <end position="49"/>
    </location>
</feature>
<feature type="strand" evidence="5">
    <location>
        <begin position="53"/>
        <end position="55"/>
    </location>
</feature>
<feature type="strand" evidence="5">
    <location>
        <begin position="57"/>
        <end position="59"/>
    </location>
</feature>
<feature type="strand" evidence="5">
    <location>
        <begin position="66"/>
        <end position="68"/>
    </location>
</feature>
<feature type="strand" evidence="5">
    <location>
        <begin position="70"/>
        <end position="79"/>
    </location>
</feature>
<feature type="strand" evidence="5">
    <location>
        <begin position="86"/>
        <end position="93"/>
    </location>
</feature>
<feature type="strand" evidence="5">
    <location>
        <begin position="96"/>
        <end position="98"/>
    </location>
</feature>
<feature type="strand" evidence="5">
    <location>
        <begin position="100"/>
        <end position="108"/>
    </location>
</feature>
<feature type="helix" evidence="5">
    <location>
        <begin position="109"/>
        <end position="111"/>
    </location>
</feature>
<feature type="strand" evidence="5">
    <location>
        <begin position="117"/>
        <end position="124"/>
    </location>
</feature>
<feature type="turn" evidence="5">
    <location>
        <begin position="125"/>
        <end position="127"/>
    </location>
</feature>
<feature type="strand" evidence="5">
    <location>
        <begin position="128"/>
        <end position="138"/>
    </location>
</feature>